<protein>
    <recommendedName>
        <fullName evidence="3">Geranylgeranyl diphosphate synthase</fullName>
        <shortName evidence="3">GGPP synthase</shortName>
        <shortName evidence="4">GGPS</shortName>
        <ecNumber evidence="2">2.5.1.29</ecNumber>
    </recommendedName>
</protein>
<feature type="chain" id="PRO_0000451296" description="Geranylgeranyl diphosphate synthase">
    <location>
        <begin position="1"/>
        <end position="350"/>
    </location>
</feature>
<feature type="short sequence motif" description="DDXXD motif" evidence="4">
    <location>
        <begin position="109"/>
        <end position="113"/>
    </location>
</feature>
<feature type="short sequence motif" description="DDXXD motif" evidence="4">
    <location>
        <begin position="240"/>
        <end position="244"/>
    </location>
</feature>
<feature type="binding site" evidence="1">
    <location>
        <position position="70"/>
    </location>
    <ligand>
        <name>isopentenyl diphosphate</name>
        <dbReference type="ChEBI" id="CHEBI:128769"/>
    </ligand>
</feature>
<feature type="binding site" evidence="1">
    <location>
        <position position="73"/>
    </location>
    <ligand>
        <name>isopentenyl diphosphate</name>
        <dbReference type="ChEBI" id="CHEBI:128769"/>
    </ligand>
</feature>
<feature type="binding site" evidence="1">
    <location>
        <position position="102"/>
    </location>
    <ligand>
        <name>isopentenyl diphosphate</name>
        <dbReference type="ChEBI" id="CHEBI:128769"/>
    </ligand>
</feature>
<feature type="binding site" evidence="1">
    <location>
        <position position="109"/>
    </location>
    <ligand>
        <name>Mg(2+)</name>
        <dbReference type="ChEBI" id="CHEBI:18420"/>
        <label>1</label>
    </ligand>
</feature>
<feature type="binding site" evidence="1">
    <location>
        <position position="109"/>
    </location>
    <ligand>
        <name>Mg(2+)</name>
        <dbReference type="ChEBI" id="CHEBI:18420"/>
        <label>2</label>
    </ligand>
</feature>
<feature type="binding site" evidence="1">
    <location>
        <position position="113"/>
    </location>
    <ligand>
        <name>Mg(2+)</name>
        <dbReference type="ChEBI" id="CHEBI:18420"/>
        <label>1</label>
    </ligand>
</feature>
<feature type="binding site" evidence="1">
    <location>
        <position position="113"/>
    </location>
    <ligand>
        <name>Mg(2+)</name>
        <dbReference type="ChEBI" id="CHEBI:18420"/>
        <label>2</label>
    </ligand>
</feature>
<feature type="binding site" evidence="1">
    <location>
        <position position="119"/>
    </location>
    <ligand>
        <name>isopentenyl diphosphate</name>
        <dbReference type="ChEBI" id="CHEBI:128769"/>
    </ligand>
</feature>
<name>GGPPS_MYCTU</name>
<evidence type="ECO:0000250" key="1">
    <source>
        <dbReference type="UniProtKB" id="Q12051"/>
    </source>
</evidence>
<evidence type="ECO:0000269" key="2">
    <source>
    </source>
</evidence>
<evidence type="ECO:0000303" key="3">
    <source>
    </source>
</evidence>
<evidence type="ECO:0000305" key="4"/>
<evidence type="ECO:0000312" key="5">
    <source>
        <dbReference type="EMBL" id="CCP46204.1"/>
    </source>
</evidence>
<reference key="1">
    <citation type="journal article" date="1998" name="Nature">
        <title>Deciphering the biology of Mycobacterium tuberculosis from the complete genome sequence.</title>
        <authorList>
            <person name="Cole S.T."/>
            <person name="Brosch R."/>
            <person name="Parkhill J."/>
            <person name="Garnier T."/>
            <person name="Churcher C.M."/>
            <person name="Harris D.E."/>
            <person name="Gordon S.V."/>
            <person name="Eiglmeier K."/>
            <person name="Gas S."/>
            <person name="Barry C.E. III"/>
            <person name="Tekaia F."/>
            <person name="Badcock K."/>
            <person name="Basham D."/>
            <person name="Brown D."/>
            <person name="Chillingworth T."/>
            <person name="Connor R."/>
            <person name="Davies R.M."/>
            <person name="Devlin K."/>
            <person name="Feltwell T."/>
            <person name="Gentles S."/>
            <person name="Hamlin N."/>
            <person name="Holroyd S."/>
            <person name="Hornsby T."/>
            <person name="Jagels K."/>
            <person name="Krogh A."/>
            <person name="McLean J."/>
            <person name="Moule S."/>
            <person name="Murphy L.D."/>
            <person name="Oliver S."/>
            <person name="Osborne J."/>
            <person name="Quail M.A."/>
            <person name="Rajandream M.A."/>
            <person name="Rogers J."/>
            <person name="Rutter S."/>
            <person name="Seeger K."/>
            <person name="Skelton S."/>
            <person name="Squares S."/>
            <person name="Squares R."/>
            <person name="Sulston J.E."/>
            <person name="Taylor K."/>
            <person name="Whitehead S."/>
            <person name="Barrell B.G."/>
        </authorList>
    </citation>
    <scope>NUCLEOTIDE SEQUENCE [LARGE SCALE GENOMIC DNA]</scope>
    <source>
        <strain>ATCC 25618 / H37Rv</strain>
    </source>
</reference>
<reference key="2">
    <citation type="journal article" date="2012" name="Front. Microbiol.">
        <title>Functional characterization and evolution of the isotuberculosinol operon in Mycobacterium tuberculosis and related Mycobacteria.</title>
        <authorList>
            <person name="Mann F.M."/>
            <person name="Xu M."/>
            <person name="Davenport E.K."/>
            <person name="Peters R.J."/>
        </authorList>
    </citation>
    <scope>FUNCTION</scope>
    <scope>CATALYTIC ACTIVITY</scope>
    <scope>BIOPHYSICOCHEMICAL PROPERTIES</scope>
    <scope>PATHWAY</scope>
</reference>
<gene>
    <name evidence="5" type="primary">idsB</name>
    <name evidence="5" type="ordered locus">Rv3383c</name>
</gene>
<proteinExistence type="evidence at protein level"/>
<accession>O50410</accession>
<accession>I6X753</accession>
<accession>L0TCL7</accession>
<keyword id="KW-0444">Lipid biosynthesis</keyword>
<keyword id="KW-0443">Lipid metabolism</keyword>
<keyword id="KW-0460">Magnesium</keyword>
<keyword id="KW-0479">Metal-binding</keyword>
<keyword id="KW-1185">Reference proteome</keyword>
<keyword id="KW-0808">Transferase</keyword>
<dbReference type="EC" id="2.5.1.29" evidence="2"/>
<dbReference type="EMBL" id="AL123456">
    <property type="protein sequence ID" value="CCP46204.1"/>
    <property type="molecule type" value="Genomic_DNA"/>
</dbReference>
<dbReference type="RefSeq" id="NP_217900.1">
    <property type="nucleotide sequence ID" value="NC_000962.3"/>
</dbReference>
<dbReference type="RefSeq" id="WP_009935184.1">
    <property type="nucleotide sequence ID" value="NZ_NVQJ01000021.1"/>
</dbReference>
<dbReference type="SMR" id="O50410"/>
<dbReference type="FunCoup" id="O50410">
    <property type="interactions" value="167"/>
</dbReference>
<dbReference type="STRING" id="83332.Rv3383c"/>
<dbReference type="PaxDb" id="83332-Rv3383c"/>
<dbReference type="DNASU" id="887680"/>
<dbReference type="GeneID" id="887680"/>
<dbReference type="KEGG" id="mtu:Rv3383c"/>
<dbReference type="KEGG" id="mtv:RVBD_3383c"/>
<dbReference type="PATRIC" id="fig|83332.111.peg.3771"/>
<dbReference type="TubercuList" id="Rv3383c"/>
<dbReference type="eggNOG" id="COG0142">
    <property type="taxonomic scope" value="Bacteria"/>
</dbReference>
<dbReference type="InParanoid" id="O50410"/>
<dbReference type="OrthoDB" id="4497239at2"/>
<dbReference type="PhylomeDB" id="O50410"/>
<dbReference type="UniPathway" id="UPA00389">
    <property type="reaction ID" value="UER00564"/>
</dbReference>
<dbReference type="Proteomes" id="UP000001584">
    <property type="component" value="Chromosome"/>
</dbReference>
<dbReference type="GO" id="GO:0005829">
    <property type="term" value="C:cytosol"/>
    <property type="evidence" value="ECO:0007005"/>
    <property type="project" value="MTBBASE"/>
</dbReference>
<dbReference type="GO" id="GO:0004311">
    <property type="term" value="F:geranylgeranyl diphosphate synthase activity"/>
    <property type="evidence" value="ECO:0007669"/>
    <property type="project" value="UniProtKB-EC"/>
</dbReference>
<dbReference type="GO" id="GO:0046872">
    <property type="term" value="F:metal ion binding"/>
    <property type="evidence" value="ECO:0007669"/>
    <property type="project" value="UniProtKB-KW"/>
</dbReference>
<dbReference type="GO" id="GO:0004659">
    <property type="term" value="F:prenyltransferase activity"/>
    <property type="evidence" value="ECO:0000318"/>
    <property type="project" value="GO_Central"/>
</dbReference>
<dbReference type="GO" id="GO:0033386">
    <property type="term" value="P:geranylgeranyl diphosphate biosynthetic process"/>
    <property type="evidence" value="ECO:0007669"/>
    <property type="project" value="UniProtKB-UniPathway"/>
</dbReference>
<dbReference type="GO" id="GO:0008299">
    <property type="term" value="P:isoprenoid biosynthetic process"/>
    <property type="evidence" value="ECO:0000318"/>
    <property type="project" value="GO_Central"/>
</dbReference>
<dbReference type="CDD" id="cd00685">
    <property type="entry name" value="Trans_IPPS_HT"/>
    <property type="match status" value="1"/>
</dbReference>
<dbReference type="Gene3D" id="1.10.600.10">
    <property type="entry name" value="Farnesyl Diphosphate Synthase"/>
    <property type="match status" value="1"/>
</dbReference>
<dbReference type="InterPro" id="IPR008949">
    <property type="entry name" value="Isoprenoid_synthase_dom_sf"/>
</dbReference>
<dbReference type="InterPro" id="IPR000092">
    <property type="entry name" value="Polyprenyl_synt"/>
</dbReference>
<dbReference type="InterPro" id="IPR033749">
    <property type="entry name" value="Polyprenyl_synt_CS"/>
</dbReference>
<dbReference type="NCBIfam" id="NF045549">
    <property type="entry name" value="GGPPsyn_IdsB"/>
    <property type="match status" value="1"/>
</dbReference>
<dbReference type="PANTHER" id="PTHR12001:SF86">
    <property type="entry name" value="GERANYLGERANYL DIPHOSPHATE SYNTHASE"/>
    <property type="match status" value="1"/>
</dbReference>
<dbReference type="PANTHER" id="PTHR12001">
    <property type="entry name" value="GERANYLGERANYL PYROPHOSPHATE SYNTHASE"/>
    <property type="match status" value="1"/>
</dbReference>
<dbReference type="Pfam" id="PF00348">
    <property type="entry name" value="polyprenyl_synt"/>
    <property type="match status" value="1"/>
</dbReference>
<dbReference type="SFLD" id="SFLDS00005">
    <property type="entry name" value="Isoprenoid_Synthase_Type_I"/>
    <property type="match status" value="1"/>
</dbReference>
<dbReference type="SFLD" id="SFLDG01017">
    <property type="entry name" value="Polyprenyl_Transferase_Like"/>
    <property type="match status" value="1"/>
</dbReference>
<dbReference type="SUPFAM" id="SSF48576">
    <property type="entry name" value="Terpenoid synthases"/>
    <property type="match status" value="1"/>
</dbReference>
<dbReference type="PROSITE" id="PS00723">
    <property type="entry name" value="POLYPRENYL_SYNTHASE_1"/>
    <property type="match status" value="1"/>
</dbReference>
<sequence length="350" mass="36432">MGGVLTLDAAFLGSVPADLGKALLERARADCGPVLHRAIESMREPLATMAGYHLGWWNADRSTAAGSSGKYFRAALVYAAAAACGGDVGDATPVSAAVELVHNFTLLHDDVMDGDATRRGRPTVWSVWGVGVAILLGDALHATAVRILTGLTDECVAVRAIRRLQMSCLDLCIGQFEDCLLEGQPEVTVDDYLRMAAGKTAALTGCCCALGALVANADDATIAALERFGHELGLAFQCVDDLIGIWGDPGVTGKPVGNDLARRKATLPVVAALNSRSEAATELAALYQAPAAMTASDVERATALVKVAGGGHVAQRCADERIQAAIAALPDAVRSPDLIALSQLICRREC</sequence>
<organism>
    <name type="scientific">Mycobacterium tuberculosis (strain ATCC 25618 / H37Rv)</name>
    <dbReference type="NCBI Taxonomy" id="83332"/>
    <lineage>
        <taxon>Bacteria</taxon>
        <taxon>Bacillati</taxon>
        <taxon>Actinomycetota</taxon>
        <taxon>Actinomycetes</taxon>
        <taxon>Mycobacteriales</taxon>
        <taxon>Mycobacteriaceae</taxon>
        <taxon>Mycobacterium</taxon>
        <taxon>Mycobacterium tuberculosis complex</taxon>
    </lineage>
</organism>
<comment type="function">
    <text evidence="2">Catalyzes the condensation of isopentenyl pyrophosphate (IPP) with (2E,6E)-farnesyl diphosphate (E,E-FPP) to yield geranylgeranyl diphosphate (GGPP).</text>
</comment>
<comment type="catalytic activity">
    <reaction evidence="2">
        <text>isopentenyl diphosphate + (2E,6E)-farnesyl diphosphate = (2E,6E,10E)-geranylgeranyl diphosphate + diphosphate</text>
        <dbReference type="Rhea" id="RHEA:17653"/>
        <dbReference type="ChEBI" id="CHEBI:33019"/>
        <dbReference type="ChEBI" id="CHEBI:58756"/>
        <dbReference type="ChEBI" id="CHEBI:128769"/>
        <dbReference type="ChEBI" id="CHEBI:175763"/>
        <dbReference type="EC" id="2.5.1.29"/>
    </reaction>
    <physiologicalReaction direction="left-to-right" evidence="2">
        <dbReference type="Rhea" id="RHEA:17654"/>
    </physiologicalReaction>
</comment>
<comment type="cofactor">
    <cofactor evidence="1">
        <name>Mg(2+)</name>
        <dbReference type="ChEBI" id="CHEBI:18420"/>
    </cofactor>
    <text evidence="1">Binds 2 Mg(2+) ions per subunit.</text>
</comment>
<comment type="biophysicochemical properties">
    <kinetics>
        <KM evidence="2">11 uM for IPP</KM>
        <KM evidence="2">19 uM for FPP</KM>
        <text evidence="2">kcat is 1.0 min(-1).</text>
    </kinetics>
</comment>
<comment type="pathway">
    <text evidence="2">Isoprenoid biosynthesis; geranylgeranyl diphosphate biosynthesis; geranylgeranyl diphosphate from farnesyl diphosphate and isopentenyl diphosphate: step 1/1.</text>
</comment>
<comment type="domain">
    <text evidence="4">Contains two aspartate-rich DDxxD motifs, designated as FARM (the first aspartate-rich motif) and SARM (the second aspartate-rich motif).</text>
</comment>
<comment type="similarity">
    <text evidence="4">Belongs to the FPP/GGPP synthase family.</text>
</comment>